<proteinExistence type="evidence at transcript level"/>
<dbReference type="EMBL" id="D87982">
    <property type="protein sequence ID" value="BAA21760.1"/>
    <property type="molecule type" value="mRNA"/>
</dbReference>
<dbReference type="PIR" id="T10698">
    <property type="entry name" value="T10698"/>
</dbReference>
<dbReference type="SMR" id="O23880"/>
<dbReference type="Allergome" id="698">
    <property type="allergen name" value="Fag e 1"/>
</dbReference>
<dbReference type="GO" id="GO:0045735">
    <property type="term" value="F:nutrient reservoir activity"/>
    <property type="evidence" value="ECO:0007669"/>
    <property type="project" value="UniProtKB-KW"/>
</dbReference>
<dbReference type="CDD" id="cd02243">
    <property type="entry name" value="cupin_11S_legumin_C"/>
    <property type="match status" value="1"/>
</dbReference>
<dbReference type="CDD" id="cd02242">
    <property type="entry name" value="cupin_11S_legumin_N"/>
    <property type="match status" value="1"/>
</dbReference>
<dbReference type="FunFam" id="2.60.120.10:FF:000073">
    <property type="entry name" value="Glycinin G1"/>
    <property type="match status" value="1"/>
</dbReference>
<dbReference type="Gene3D" id="2.60.120.10">
    <property type="entry name" value="Jelly Rolls"/>
    <property type="match status" value="2"/>
</dbReference>
<dbReference type="InterPro" id="IPR006044">
    <property type="entry name" value="11S_seedstore_pln"/>
</dbReference>
<dbReference type="InterPro" id="IPR006045">
    <property type="entry name" value="Cupin_1"/>
</dbReference>
<dbReference type="InterPro" id="IPR014710">
    <property type="entry name" value="RmlC-like_jellyroll"/>
</dbReference>
<dbReference type="InterPro" id="IPR011051">
    <property type="entry name" value="RmlC_Cupin_sf"/>
</dbReference>
<dbReference type="InterPro" id="IPR050253">
    <property type="entry name" value="Seed_Storage-Functional"/>
</dbReference>
<dbReference type="PANTHER" id="PTHR31189:SF76">
    <property type="entry name" value="11S GLOBULIN SUBUNIT BETA-LIKE"/>
    <property type="match status" value="1"/>
</dbReference>
<dbReference type="PANTHER" id="PTHR31189">
    <property type="entry name" value="OS03G0336100 PROTEIN-RELATED"/>
    <property type="match status" value="1"/>
</dbReference>
<dbReference type="Pfam" id="PF00190">
    <property type="entry name" value="Cupin_1"/>
    <property type="match status" value="2"/>
</dbReference>
<dbReference type="PRINTS" id="PR00439">
    <property type="entry name" value="11SGLOBULIN"/>
</dbReference>
<dbReference type="SMART" id="SM00835">
    <property type="entry name" value="Cupin_1"/>
    <property type="match status" value="2"/>
</dbReference>
<dbReference type="SUPFAM" id="SSF51182">
    <property type="entry name" value="RmlC-like cupins"/>
    <property type="match status" value="1"/>
</dbReference>
<name>13S2_FAGES</name>
<keyword id="KW-1015">Disulfide bond</keyword>
<keyword id="KW-0708">Seed storage protein</keyword>
<keyword id="KW-0732">Signal</keyword>
<keyword id="KW-0758">Storage protein</keyword>
<reference key="1">
    <citation type="journal article" date="2001" name="J. Agric. Food Chem.">
        <title>Expression, cloning, and immunological analysis of buckwheat (Fagopyrum esculentum Moench) seed storage proteins.</title>
        <authorList>
            <person name="Fujino K."/>
            <person name="Funatsuki H."/>
            <person name="Inada M."/>
            <person name="Shimono Y."/>
            <person name="Kikuta Y."/>
        </authorList>
    </citation>
    <scope>NUCLEOTIDE SEQUENCE [MRNA]</scope>
    <source>
        <strain>cv. Kitayuki</strain>
        <tissue>Immature seed</tissue>
    </source>
</reference>
<feature type="signal peptide" evidence="2">
    <location>
        <begin position="1"/>
        <end position="20"/>
    </location>
</feature>
<feature type="chain" id="PRO_0000032005" description="13S globulin seed storage protein 2 acidic chain" evidence="1">
    <location>
        <begin position="21"/>
        <end position="313"/>
    </location>
</feature>
<feature type="chain" id="PRO_0000032006" description="13S globulin seed storage protein 2 basic chain" evidence="1">
    <location>
        <begin position="314"/>
        <end position="504"/>
    </location>
</feature>
<feature type="domain" description="Cupin type-1 1" evidence="2">
    <location>
        <begin position="51"/>
        <end position="265"/>
    </location>
</feature>
<feature type="domain" description="Cupin type-1 2" evidence="2">
    <location>
        <begin position="326"/>
        <end position="475"/>
    </location>
</feature>
<feature type="region of interest" description="Disordered" evidence="3">
    <location>
        <begin position="128"/>
        <end position="158"/>
    </location>
</feature>
<feature type="region of interest" description="Disordered" evidence="3">
    <location>
        <begin position="214"/>
        <end position="237"/>
    </location>
</feature>
<feature type="region of interest" description="Disordered" evidence="3">
    <location>
        <begin position="289"/>
        <end position="314"/>
    </location>
</feature>
<feature type="compositionally biased region" description="Basic and acidic residues" evidence="3">
    <location>
        <begin position="144"/>
        <end position="158"/>
    </location>
</feature>
<feature type="compositionally biased region" description="Basic and acidic residues" evidence="3">
    <location>
        <begin position="218"/>
        <end position="231"/>
    </location>
</feature>
<feature type="disulfide bond" evidence="1">
    <location>
        <begin position="46"/>
        <end position="79"/>
    </location>
</feature>
<feature type="disulfide bond" description="Interchain (between acidic and basic chains)" evidence="2">
    <location>
        <begin position="122"/>
        <end position="320"/>
    </location>
</feature>
<accession>O23880</accession>
<comment type="function">
    <text>Seed storage protein.</text>
</comment>
<comment type="subunit">
    <text evidence="1">Hexamer; each subunit is composed of an acidic and a basic chain derived from a single precursor and linked by a disulfide bond.</text>
</comment>
<comment type="miscellaneous">
    <text>The sequence of the probable beta chain is highly homologous to the N-terminal sequence of BW24KD, a major buckwheat allergen.</text>
</comment>
<comment type="similarity">
    <text evidence="4">Belongs to the 11S seed storage protein (globulins) family.</text>
</comment>
<evidence type="ECO:0000250" key="1"/>
<evidence type="ECO:0000255" key="2"/>
<evidence type="ECO:0000256" key="3">
    <source>
        <dbReference type="SAM" id="MobiDB-lite"/>
    </source>
</evidence>
<evidence type="ECO:0000305" key="4"/>
<organism>
    <name type="scientific">Fagopyrum esculentum</name>
    <name type="common">Common buckwheat</name>
    <name type="synonym">Polygonum fagopyrum</name>
    <dbReference type="NCBI Taxonomy" id="3617"/>
    <lineage>
        <taxon>Eukaryota</taxon>
        <taxon>Viridiplantae</taxon>
        <taxon>Streptophyta</taxon>
        <taxon>Embryophyta</taxon>
        <taxon>Tracheophyta</taxon>
        <taxon>Spermatophyta</taxon>
        <taxon>Magnoliopsida</taxon>
        <taxon>eudicotyledons</taxon>
        <taxon>Gunneridae</taxon>
        <taxon>Pentapetalae</taxon>
        <taxon>Caryophyllales</taxon>
        <taxon>Polygonaceae</taxon>
        <taxon>Polygonoideae</taxon>
        <taxon>Fagopyreae</taxon>
        <taxon>Fagopyrum</taxon>
    </lineage>
</organism>
<protein>
    <recommendedName>
        <fullName>13S globulin seed storage protein 2</fullName>
    </recommendedName>
    <alternativeName>
        <fullName>Legumin-like protein 2</fullName>
    </alternativeName>
    <component>
        <recommendedName>
            <fullName>13S globulin seed storage protein 2 acidic chain</fullName>
        </recommendedName>
    </component>
    <component>
        <recommendedName>
            <fullName>13S globulin seed storage protein 2 basic chain</fullName>
        </recommendedName>
    </component>
</protein>
<gene>
    <name type="primary">FA18</name>
</gene>
<sequence length="504" mass="57043">MSTKLILSFSLCLMVLSCSAQLWPWQKGQGSRPHHGRQQHQFQHQCDIQRLTASEPSRRVRSEAGVTEIWDHDTPEFRCTGFVAVRVVIQPGGLLLPSYSNAPYITFVEQGRGVQGVVIPGCPETFQSDSEFEYPQSQRGRHSRQSESEEESSRGDQHQKIFRIREGDVIPSPAGVVQWTHNDGNDDLISVTLLDANSYHKQLDENVRSFFLAGQSQRETREEGSDRQSRESDDDEALLGANILSGFQDEILHELFRDVDRETISKLRGENDQRGFIVQAQDLKLRVPQDFEEEYERERGDRRRGQGGSGRSNGVEQGFCNLKFRRNFNTPTNTYVFNPRAGRINTVNSNSLPILEFLQLSAQHVVLYKNAIIGPRWNLNAHSALYVTRGEGRVQVVGDEGKSVFDDKVQRGQILVVPQGFAVVLKAGREGLEWVELKNSGNAITSPIGGRTSVLRAIPVEVLANSYDISTKEAYKLKNGRQEVEVFRPFQSRDEKERERFSIV</sequence>